<dbReference type="EMBL" id="CP000961">
    <property type="protein sequence ID" value="ACA86439.1"/>
    <property type="molecule type" value="Genomic_DNA"/>
</dbReference>
<dbReference type="RefSeq" id="WP_012324784.1">
    <property type="nucleotide sequence ID" value="NC_010506.1"/>
</dbReference>
<dbReference type="SMR" id="B1KDP2"/>
<dbReference type="STRING" id="392500.Swoo_2155"/>
<dbReference type="KEGG" id="swd:Swoo_2155"/>
<dbReference type="eggNOG" id="COG1825">
    <property type="taxonomic scope" value="Bacteria"/>
</dbReference>
<dbReference type="HOGENOM" id="CLU_137946_0_0_6"/>
<dbReference type="Proteomes" id="UP000002168">
    <property type="component" value="Chromosome"/>
</dbReference>
<dbReference type="GO" id="GO:0022625">
    <property type="term" value="C:cytosolic large ribosomal subunit"/>
    <property type="evidence" value="ECO:0007669"/>
    <property type="project" value="TreeGrafter"/>
</dbReference>
<dbReference type="GO" id="GO:0008097">
    <property type="term" value="F:5S rRNA binding"/>
    <property type="evidence" value="ECO:0007669"/>
    <property type="project" value="InterPro"/>
</dbReference>
<dbReference type="GO" id="GO:0003735">
    <property type="term" value="F:structural constituent of ribosome"/>
    <property type="evidence" value="ECO:0007669"/>
    <property type="project" value="InterPro"/>
</dbReference>
<dbReference type="GO" id="GO:0006412">
    <property type="term" value="P:translation"/>
    <property type="evidence" value="ECO:0007669"/>
    <property type="project" value="UniProtKB-UniRule"/>
</dbReference>
<dbReference type="CDD" id="cd00495">
    <property type="entry name" value="Ribosomal_L25_TL5_CTC"/>
    <property type="match status" value="1"/>
</dbReference>
<dbReference type="FunFam" id="2.40.240.10:FF:000002">
    <property type="entry name" value="50S ribosomal protein L25"/>
    <property type="match status" value="1"/>
</dbReference>
<dbReference type="Gene3D" id="2.40.240.10">
    <property type="entry name" value="Ribosomal Protein L25, Chain P"/>
    <property type="match status" value="1"/>
</dbReference>
<dbReference type="HAMAP" id="MF_01336">
    <property type="entry name" value="Ribosomal_bL25"/>
    <property type="match status" value="1"/>
</dbReference>
<dbReference type="InterPro" id="IPR020056">
    <property type="entry name" value="Rbsml_bL25/Gln-tRNA_synth_N"/>
</dbReference>
<dbReference type="InterPro" id="IPR011035">
    <property type="entry name" value="Ribosomal_bL25/Gln-tRNA_synth"/>
</dbReference>
<dbReference type="InterPro" id="IPR020055">
    <property type="entry name" value="Ribosomal_bL25_short"/>
</dbReference>
<dbReference type="InterPro" id="IPR029751">
    <property type="entry name" value="Ribosomal_L25_dom"/>
</dbReference>
<dbReference type="InterPro" id="IPR020930">
    <property type="entry name" value="Ribosomal_uL5_bac-type"/>
</dbReference>
<dbReference type="NCBIfam" id="NF004612">
    <property type="entry name" value="PRK05943.1"/>
    <property type="match status" value="1"/>
</dbReference>
<dbReference type="PANTHER" id="PTHR33284">
    <property type="entry name" value="RIBOSOMAL PROTEIN L25/GLN-TRNA SYNTHETASE, ANTI-CODON-BINDING DOMAIN-CONTAINING PROTEIN"/>
    <property type="match status" value="1"/>
</dbReference>
<dbReference type="PANTHER" id="PTHR33284:SF1">
    <property type="entry name" value="RIBOSOMAL PROTEIN L25_GLN-TRNA SYNTHETASE, ANTI-CODON-BINDING DOMAIN-CONTAINING PROTEIN"/>
    <property type="match status" value="1"/>
</dbReference>
<dbReference type="Pfam" id="PF01386">
    <property type="entry name" value="Ribosomal_L25p"/>
    <property type="match status" value="1"/>
</dbReference>
<dbReference type="SUPFAM" id="SSF50715">
    <property type="entry name" value="Ribosomal protein L25-like"/>
    <property type="match status" value="1"/>
</dbReference>
<feature type="chain" id="PRO_1000142598" description="Large ribosomal subunit protein bL25">
    <location>
        <begin position="1"/>
        <end position="95"/>
    </location>
</feature>
<name>RL25_SHEWM</name>
<proteinExistence type="inferred from homology"/>
<keyword id="KW-1185">Reference proteome</keyword>
<keyword id="KW-0687">Ribonucleoprotein</keyword>
<keyword id="KW-0689">Ribosomal protein</keyword>
<keyword id="KW-0694">RNA-binding</keyword>
<keyword id="KW-0699">rRNA-binding</keyword>
<gene>
    <name evidence="1" type="primary">rplY</name>
    <name type="ordered locus">Swoo_2155</name>
</gene>
<reference key="1">
    <citation type="submission" date="2008-02" db="EMBL/GenBank/DDBJ databases">
        <title>Complete sequence of Shewanella woodyi ATCC 51908.</title>
        <authorList>
            <consortium name="US DOE Joint Genome Institute"/>
            <person name="Copeland A."/>
            <person name="Lucas S."/>
            <person name="Lapidus A."/>
            <person name="Glavina del Rio T."/>
            <person name="Dalin E."/>
            <person name="Tice H."/>
            <person name="Bruce D."/>
            <person name="Goodwin L."/>
            <person name="Pitluck S."/>
            <person name="Sims D."/>
            <person name="Brettin T."/>
            <person name="Detter J.C."/>
            <person name="Han C."/>
            <person name="Kuske C.R."/>
            <person name="Schmutz J."/>
            <person name="Larimer F."/>
            <person name="Land M."/>
            <person name="Hauser L."/>
            <person name="Kyrpides N."/>
            <person name="Lykidis A."/>
            <person name="Zhao J.-S."/>
            <person name="Richardson P."/>
        </authorList>
    </citation>
    <scope>NUCLEOTIDE SEQUENCE [LARGE SCALE GENOMIC DNA]</scope>
    <source>
        <strain>ATCC 51908 / MS32</strain>
    </source>
</reference>
<sequence length="95" mass="10661">MSYTIAAQVRTEIGKGSSRRLRHADKVPAVIYGPGKEPVAIVFDHKDIINIQENEDFYTSTLTINLDGSDVKVSVKAMQRHAFKPLIEHVDFTYA</sequence>
<evidence type="ECO:0000255" key="1">
    <source>
        <dbReference type="HAMAP-Rule" id="MF_01336"/>
    </source>
</evidence>
<evidence type="ECO:0000305" key="2"/>
<accession>B1KDP2</accession>
<comment type="function">
    <text evidence="1">This is one of the proteins that binds to the 5S RNA in the ribosome where it forms part of the central protuberance.</text>
</comment>
<comment type="subunit">
    <text evidence="1">Part of the 50S ribosomal subunit; part of the 5S rRNA/L5/L18/L25 subcomplex. Contacts the 5S rRNA. Binds to the 5S rRNA independently of L5 and L18.</text>
</comment>
<comment type="similarity">
    <text evidence="1">Belongs to the bacterial ribosomal protein bL25 family.</text>
</comment>
<protein>
    <recommendedName>
        <fullName evidence="1">Large ribosomal subunit protein bL25</fullName>
    </recommendedName>
    <alternativeName>
        <fullName evidence="2">50S ribosomal protein L25</fullName>
    </alternativeName>
</protein>
<organism>
    <name type="scientific">Shewanella woodyi (strain ATCC 51908 / MS32)</name>
    <dbReference type="NCBI Taxonomy" id="392500"/>
    <lineage>
        <taxon>Bacteria</taxon>
        <taxon>Pseudomonadati</taxon>
        <taxon>Pseudomonadota</taxon>
        <taxon>Gammaproteobacteria</taxon>
        <taxon>Alteromonadales</taxon>
        <taxon>Shewanellaceae</taxon>
        <taxon>Shewanella</taxon>
    </lineage>
</organism>